<keyword id="KW-0028">Amino-acid biosynthesis</keyword>
<keyword id="KW-0963">Cytoplasm</keyword>
<keyword id="KW-0554">One-carbon metabolism</keyword>
<keyword id="KW-0663">Pyridoxal phosphate</keyword>
<keyword id="KW-0808">Transferase</keyword>
<accession>Q253I4</accession>
<sequence>MASLLHKFLENASGKKGQDLASTAYLAALDHLLHSFPSIGKSVIDELKSQRSRLKMIASENYSSISVQLAMGNLLTDKYCEGSPFKRFYSCCENVDAIEWECAETAKELFGAESAFVQPHSGADANLLAIMAIITQKIQGPAVKRLGYKTINDLTDKEYAELKAEIGSHVCLGPSLNSGGHLTHGNVRLNVMSKLMRCLPYEVSKKTELFDYAEIARLVRTHKPTVLIAGYSSYSRRLNFSILKQIADDCGAVLWVDMAHFAGLVAGGVFVEEENPIPFADIVTTTTHKTLRGPRGGLMLSTKEYEGMINRACPLMMGGPLPHVIAAKAIALKEALTVDFKKYAHQVVDNARTLAEHFQKHGLRLLTGGTDNHMLIIDLTSLGIPGNVAEDILSSVGIAVNRNTIPSDSEGVWRTSGIRLGTPALTSLGMGSDEMEEVANIIVKVLRNITLRRNADDNFSKSEGELPENIAQEAKARVADLLARFPLYPEIDLETLV</sequence>
<proteinExistence type="inferred from homology"/>
<feature type="chain" id="PRO_1000006233" description="Serine hydroxymethyltransferase">
    <location>
        <begin position="1"/>
        <end position="497"/>
    </location>
</feature>
<feature type="binding site" evidence="1">
    <location>
        <position position="176"/>
    </location>
    <ligand>
        <name>(6S)-5,6,7,8-tetrahydrofolate</name>
        <dbReference type="ChEBI" id="CHEBI:57453"/>
    </ligand>
</feature>
<feature type="binding site" evidence="1">
    <location>
        <begin position="180"/>
        <end position="182"/>
    </location>
    <ligand>
        <name>(6S)-5,6,7,8-tetrahydrofolate</name>
        <dbReference type="ChEBI" id="CHEBI:57453"/>
    </ligand>
</feature>
<feature type="site" description="Plays an important role in substrate specificity" evidence="1">
    <location>
        <position position="288"/>
    </location>
</feature>
<feature type="modified residue" description="N6-(pyridoxal phosphate)lysine" evidence="1">
    <location>
        <position position="289"/>
    </location>
</feature>
<name>GLYA_CHLFF</name>
<organism>
    <name type="scientific">Chlamydia felis (strain Fe/C-56)</name>
    <name type="common">Chlamydophila felis</name>
    <dbReference type="NCBI Taxonomy" id="264202"/>
    <lineage>
        <taxon>Bacteria</taxon>
        <taxon>Pseudomonadati</taxon>
        <taxon>Chlamydiota</taxon>
        <taxon>Chlamydiia</taxon>
        <taxon>Chlamydiales</taxon>
        <taxon>Chlamydiaceae</taxon>
        <taxon>Chlamydia/Chlamydophila group</taxon>
        <taxon>Chlamydia</taxon>
    </lineage>
</organism>
<gene>
    <name evidence="1" type="primary">glyA</name>
    <name type="ordered locus">CF0782</name>
</gene>
<evidence type="ECO:0000255" key="1">
    <source>
        <dbReference type="HAMAP-Rule" id="MF_00051"/>
    </source>
</evidence>
<reference key="1">
    <citation type="journal article" date="2006" name="DNA Res.">
        <title>Genome sequence of the cat pathogen, Chlamydophila felis.</title>
        <authorList>
            <person name="Azuma Y."/>
            <person name="Hirakawa H."/>
            <person name="Yamashita A."/>
            <person name="Cai Y."/>
            <person name="Rahman M.A."/>
            <person name="Suzuki H."/>
            <person name="Mitaku S."/>
            <person name="Toh H."/>
            <person name="Goto S."/>
            <person name="Murakami T."/>
            <person name="Sugi K."/>
            <person name="Hayashi H."/>
            <person name="Fukushi H."/>
            <person name="Hattori M."/>
            <person name="Kuhara S."/>
            <person name="Shirai M."/>
        </authorList>
    </citation>
    <scope>NUCLEOTIDE SEQUENCE [LARGE SCALE GENOMIC DNA]</scope>
    <source>
        <strain>Fe/C-56</strain>
    </source>
</reference>
<comment type="function">
    <text evidence="1">Catalyzes the reversible interconversion of serine and glycine with tetrahydrofolate (THF) serving as the one-carbon carrier. This reaction serves as the major source of one-carbon groups required for the biosynthesis of purines, thymidylate, methionine, and other important biomolecules. Also exhibits THF-independent aldolase activity toward beta-hydroxyamino acids, producing glycine and aldehydes, via a retro-aldol mechanism.</text>
</comment>
<comment type="catalytic activity">
    <reaction evidence="1">
        <text>(6R)-5,10-methylene-5,6,7,8-tetrahydrofolate + glycine + H2O = (6S)-5,6,7,8-tetrahydrofolate + L-serine</text>
        <dbReference type="Rhea" id="RHEA:15481"/>
        <dbReference type="ChEBI" id="CHEBI:15377"/>
        <dbReference type="ChEBI" id="CHEBI:15636"/>
        <dbReference type="ChEBI" id="CHEBI:33384"/>
        <dbReference type="ChEBI" id="CHEBI:57305"/>
        <dbReference type="ChEBI" id="CHEBI:57453"/>
        <dbReference type="EC" id="2.1.2.1"/>
    </reaction>
</comment>
<comment type="cofactor">
    <cofactor evidence="1">
        <name>pyridoxal 5'-phosphate</name>
        <dbReference type="ChEBI" id="CHEBI:597326"/>
    </cofactor>
</comment>
<comment type="pathway">
    <text evidence="1">One-carbon metabolism; tetrahydrofolate interconversion.</text>
</comment>
<comment type="pathway">
    <text evidence="1">Amino-acid biosynthesis; glycine biosynthesis; glycine from L-serine: step 1/1.</text>
</comment>
<comment type="subunit">
    <text evidence="1">Homodimer.</text>
</comment>
<comment type="subcellular location">
    <subcellularLocation>
        <location evidence="1">Cytoplasm</location>
    </subcellularLocation>
</comment>
<comment type="similarity">
    <text evidence="1">Belongs to the SHMT family.</text>
</comment>
<dbReference type="EC" id="2.1.2.1" evidence="1"/>
<dbReference type="EMBL" id="AP006861">
    <property type="protein sequence ID" value="BAE81554.1"/>
    <property type="molecule type" value="Genomic_DNA"/>
</dbReference>
<dbReference type="RefSeq" id="WP_011458332.1">
    <property type="nucleotide sequence ID" value="NC_007899.1"/>
</dbReference>
<dbReference type="SMR" id="Q253I4"/>
<dbReference type="STRING" id="264202.CF0782"/>
<dbReference type="KEGG" id="cfe:CF0782"/>
<dbReference type="eggNOG" id="COG0112">
    <property type="taxonomic scope" value="Bacteria"/>
</dbReference>
<dbReference type="HOGENOM" id="CLU_022477_2_1_0"/>
<dbReference type="OrthoDB" id="9803846at2"/>
<dbReference type="UniPathway" id="UPA00193"/>
<dbReference type="UniPathway" id="UPA00288">
    <property type="reaction ID" value="UER01023"/>
</dbReference>
<dbReference type="Proteomes" id="UP000001260">
    <property type="component" value="Chromosome"/>
</dbReference>
<dbReference type="GO" id="GO:0005829">
    <property type="term" value="C:cytosol"/>
    <property type="evidence" value="ECO:0007669"/>
    <property type="project" value="TreeGrafter"/>
</dbReference>
<dbReference type="GO" id="GO:0004372">
    <property type="term" value="F:glycine hydroxymethyltransferase activity"/>
    <property type="evidence" value="ECO:0007669"/>
    <property type="project" value="UniProtKB-UniRule"/>
</dbReference>
<dbReference type="GO" id="GO:0030170">
    <property type="term" value="F:pyridoxal phosphate binding"/>
    <property type="evidence" value="ECO:0007669"/>
    <property type="project" value="UniProtKB-UniRule"/>
</dbReference>
<dbReference type="GO" id="GO:0019264">
    <property type="term" value="P:glycine biosynthetic process from serine"/>
    <property type="evidence" value="ECO:0007669"/>
    <property type="project" value="UniProtKB-UniRule"/>
</dbReference>
<dbReference type="GO" id="GO:0035999">
    <property type="term" value="P:tetrahydrofolate interconversion"/>
    <property type="evidence" value="ECO:0007669"/>
    <property type="project" value="UniProtKB-UniRule"/>
</dbReference>
<dbReference type="CDD" id="cd00378">
    <property type="entry name" value="SHMT"/>
    <property type="match status" value="1"/>
</dbReference>
<dbReference type="FunFam" id="3.40.640.10:FF:000060">
    <property type="entry name" value="Serine hydroxymethyltransferase"/>
    <property type="match status" value="1"/>
</dbReference>
<dbReference type="Gene3D" id="3.90.1150.10">
    <property type="entry name" value="Aspartate Aminotransferase, domain 1"/>
    <property type="match status" value="1"/>
</dbReference>
<dbReference type="Gene3D" id="3.40.640.10">
    <property type="entry name" value="Type I PLP-dependent aspartate aminotransferase-like (Major domain)"/>
    <property type="match status" value="1"/>
</dbReference>
<dbReference type="HAMAP" id="MF_00051">
    <property type="entry name" value="SHMT"/>
    <property type="match status" value="1"/>
</dbReference>
<dbReference type="InterPro" id="IPR015424">
    <property type="entry name" value="PyrdxlP-dep_Trfase"/>
</dbReference>
<dbReference type="InterPro" id="IPR015421">
    <property type="entry name" value="PyrdxlP-dep_Trfase_major"/>
</dbReference>
<dbReference type="InterPro" id="IPR015422">
    <property type="entry name" value="PyrdxlP-dep_Trfase_small"/>
</dbReference>
<dbReference type="InterPro" id="IPR001085">
    <property type="entry name" value="Ser_HO-MeTrfase"/>
</dbReference>
<dbReference type="InterPro" id="IPR049943">
    <property type="entry name" value="Ser_HO-MeTrfase-like"/>
</dbReference>
<dbReference type="InterPro" id="IPR019798">
    <property type="entry name" value="Ser_HO-MeTrfase_PLP_BS"/>
</dbReference>
<dbReference type="InterPro" id="IPR039429">
    <property type="entry name" value="SHMT-like_dom"/>
</dbReference>
<dbReference type="NCBIfam" id="NF000586">
    <property type="entry name" value="PRK00011.1"/>
    <property type="match status" value="1"/>
</dbReference>
<dbReference type="NCBIfam" id="NF010094">
    <property type="entry name" value="PRK13580.1"/>
    <property type="match status" value="1"/>
</dbReference>
<dbReference type="PANTHER" id="PTHR11680">
    <property type="entry name" value="SERINE HYDROXYMETHYLTRANSFERASE"/>
    <property type="match status" value="1"/>
</dbReference>
<dbReference type="PANTHER" id="PTHR11680:SF35">
    <property type="entry name" value="SERINE HYDROXYMETHYLTRANSFERASE 1"/>
    <property type="match status" value="1"/>
</dbReference>
<dbReference type="Pfam" id="PF00464">
    <property type="entry name" value="SHMT"/>
    <property type="match status" value="2"/>
</dbReference>
<dbReference type="PIRSF" id="PIRSF000412">
    <property type="entry name" value="SHMT"/>
    <property type="match status" value="1"/>
</dbReference>
<dbReference type="SUPFAM" id="SSF53383">
    <property type="entry name" value="PLP-dependent transferases"/>
    <property type="match status" value="1"/>
</dbReference>
<dbReference type="PROSITE" id="PS00096">
    <property type="entry name" value="SHMT"/>
    <property type="match status" value="1"/>
</dbReference>
<protein>
    <recommendedName>
        <fullName evidence="1">Serine hydroxymethyltransferase</fullName>
        <shortName evidence="1">SHMT</shortName>
        <shortName evidence="1">Serine methylase</shortName>
        <ecNumber evidence="1">2.1.2.1</ecNumber>
    </recommendedName>
</protein>